<feature type="signal peptide">
    <location>
        <begin position="1"/>
        <end position="19"/>
    </location>
</feature>
<feature type="chain" id="PRO_0000035293" description="Beta-toxin CsE3">
    <location>
        <begin position="20"/>
        <end position="85"/>
    </location>
</feature>
<feature type="domain" description="LCN-type CS-alpha/beta" evidence="2">
    <location>
        <begin position="20"/>
        <end position="85"/>
    </location>
</feature>
<feature type="modified residue" description="Asparagine amide" evidence="1">
    <location>
        <position position="85"/>
    </location>
</feature>
<feature type="disulfide bond" evidence="2">
    <location>
        <begin position="31"/>
        <end position="84"/>
    </location>
</feature>
<feature type="disulfide bond" evidence="2">
    <location>
        <begin position="35"/>
        <end position="60"/>
    </location>
</feature>
<feature type="disulfide bond" evidence="2">
    <location>
        <begin position="44"/>
        <end position="65"/>
    </location>
</feature>
<feature type="disulfide bond" evidence="2">
    <location>
        <begin position="48"/>
        <end position="67"/>
    </location>
</feature>
<keyword id="KW-0027">Amidation</keyword>
<keyword id="KW-1015">Disulfide bond</keyword>
<keyword id="KW-0872">Ion channel impairing toxin</keyword>
<keyword id="KW-0528">Neurotoxin</keyword>
<keyword id="KW-0964">Secreted</keyword>
<keyword id="KW-0732">Signal</keyword>
<keyword id="KW-0800">Toxin</keyword>
<keyword id="KW-0738">Voltage-gated sodium channel impairing toxin</keyword>
<sequence length="87" mass="9818">MNSLLIIAACLALIGTVWAKEGYIVNYHTGCKYECFKLGDNDYCLRECKLRHGKGSGGYCYAFGCWCTHLYEQAVVWPLPKKKCNGK</sequence>
<dbReference type="EMBL" id="AF338449">
    <property type="protein sequence ID" value="AAL23417.1"/>
    <property type="molecule type" value="mRNA"/>
</dbReference>
<dbReference type="SMR" id="Q95WD2"/>
<dbReference type="GO" id="GO:0005576">
    <property type="term" value="C:extracellular region"/>
    <property type="evidence" value="ECO:0007669"/>
    <property type="project" value="UniProtKB-SubCell"/>
</dbReference>
<dbReference type="GO" id="GO:0019871">
    <property type="term" value="F:sodium channel inhibitor activity"/>
    <property type="evidence" value="ECO:0007669"/>
    <property type="project" value="InterPro"/>
</dbReference>
<dbReference type="GO" id="GO:0090729">
    <property type="term" value="F:toxin activity"/>
    <property type="evidence" value="ECO:0007669"/>
    <property type="project" value="UniProtKB-KW"/>
</dbReference>
<dbReference type="GO" id="GO:0006952">
    <property type="term" value="P:defense response"/>
    <property type="evidence" value="ECO:0007669"/>
    <property type="project" value="InterPro"/>
</dbReference>
<dbReference type="CDD" id="cd23106">
    <property type="entry name" value="neurotoxins_LC_scorpion"/>
    <property type="match status" value="1"/>
</dbReference>
<dbReference type="FunFam" id="3.30.30.10:FF:000002">
    <property type="entry name" value="Alpha-like toxin BmK-M1"/>
    <property type="match status" value="1"/>
</dbReference>
<dbReference type="Gene3D" id="3.30.30.10">
    <property type="entry name" value="Knottin, scorpion toxin-like"/>
    <property type="match status" value="1"/>
</dbReference>
<dbReference type="InterPro" id="IPR044062">
    <property type="entry name" value="LCN-type_CS_alpha_beta_dom"/>
</dbReference>
<dbReference type="InterPro" id="IPR003614">
    <property type="entry name" value="Scorpion_toxin-like"/>
</dbReference>
<dbReference type="InterPro" id="IPR036574">
    <property type="entry name" value="Scorpion_toxin-like_sf"/>
</dbReference>
<dbReference type="InterPro" id="IPR018218">
    <property type="entry name" value="Scorpion_toxinL"/>
</dbReference>
<dbReference type="PRINTS" id="PR00285">
    <property type="entry name" value="SCORPNTOXIN"/>
</dbReference>
<dbReference type="SMART" id="SM00505">
    <property type="entry name" value="Knot1"/>
    <property type="match status" value="1"/>
</dbReference>
<dbReference type="SUPFAM" id="SSF57095">
    <property type="entry name" value="Scorpion toxin-like"/>
    <property type="match status" value="1"/>
</dbReference>
<dbReference type="PROSITE" id="PS51863">
    <property type="entry name" value="LCN_CSAB"/>
    <property type="match status" value="1"/>
</dbReference>
<reference key="1">
    <citation type="journal article" date="2001" name="Toxicon">
        <title>Genes and peptides from the scorpion Centruroides sculpturatus Ewing, that recognize Na(+)-channels.</title>
        <authorList>
            <person name="Corona M."/>
            <person name="Valdez-Cruz N.A."/>
            <person name="Merino E."/>
            <person name="Zurita M."/>
            <person name="Possani L.D."/>
        </authorList>
    </citation>
    <scope>NUCLEOTIDE SEQUENCE [MRNA]</scope>
    <source>
        <tissue>Venom gland</tissue>
    </source>
</reference>
<reference key="2">
    <citation type="journal article" date="2005" name="Toxicon">
        <title>Overview of scorpion toxins specific for Na+ channels and related peptides: biodiversity, structure-function relationships and evolution.</title>
        <authorList>
            <person name="Rodriguez de la Vega R.C."/>
            <person name="Possani L.D."/>
        </authorList>
    </citation>
    <scope>REVIEW</scope>
    <scope>FUNCTION</scope>
</reference>
<organism>
    <name type="scientific">Centruroides sculpturatus</name>
    <name type="common">Arizona bark scorpion</name>
    <dbReference type="NCBI Taxonomy" id="218467"/>
    <lineage>
        <taxon>Eukaryota</taxon>
        <taxon>Metazoa</taxon>
        <taxon>Ecdysozoa</taxon>
        <taxon>Arthropoda</taxon>
        <taxon>Chelicerata</taxon>
        <taxon>Arachnida</taxon>
        <taxon>Scorpiones</taxon>
        <taxon>Buthida</taxon>
        <taxon>Buthoidea</taxon>
        <taxon>Buthidae</taxon>
        <taxon>Centruroides</taxon>
    </lineage>
</organism>
<accession>Q95WD2</accession>
<protein>
    <recommendedName>
        <fullName>Beta-toxin CsE3</fullName>
    </recommendedName>
    <alternativeName>
        <fullName>Neurotoxin E3</fullName>
    </alternativeName>
</protein>
<evidence type="ECO:0000250" key="1"/>
<evidence type="ECO:0000255" key="2">
    <source>
        <dbReference type="PROSITE-ProRule" id="PRU01210"/>
    </source>
</evidence>
<evidence type="ECO:0000269" key="3">
    <source>
    </source>
</evidence>
<evidence type="ECO:0000305" key="4"/>
<comment type="function">
    <text evidence="3">Beta toxins bind voltage-independently at site-4 of sodium channels (Nav) and shift the voltage of activation toward more negative potentials thereby affecting sodium channel activation and promoting spontaneous and repetitive firing.</text>
</comment>
<comment type="subcellular location">
    <subcellularLocation>
        <location>Secreted</location>
    </subcellularLocation>
</comment>
<comment type="tissue specificity">
    <text>Expressed by the venom gland.</text>
</comment>
<comment type="domain">
    <text evidence="4">Has the structural arrangement of an alpha-helix connected to antiparallel beta-sheets by disulfide bonds (CS-alpha/beta).</text>
</comment>
<comment type="similarity">
    <text evidence="4">Belongs to the long (4 C-C) scorpion toxin superfamily. Sodium channel inhibitor family. Beta subfamily.</text>
</comment>
<proteinExistence type="evidence at transcript level"/>
<name>SCE3_CENSC</name>